<sequence length="297" mass="33583">MYAQPVTNTKEVKWQKVLYERQPFPDNYVDRRFLEELRKNIHARKYQYWAVVFESSVVIQQLCSVCVFVVIWWYMDEGLLAPHWLLGTGLASSLIGYVLFDLIDGGEGRKKSGQTRWADLKSALVFITFTYGFSPVLKTLTESVSTDTIYAMSVFMLLGHLIFFDYGANAAIVSSTLSLNMAIFASVCLASRLPRSLHAFIMVTFAIQIFALWPMLQKKLKACTPRSYVGVTLLFAFSAVGGLLSISAVGAVLFALLLMSISCLCPFYLIRLQLFKENIHGPWDEAEIKEDLSRFLS</sequence>
<gene>
    <name evidence="8" type="primary">PIGC</name>
    <name type="synonym">GPI2</name>
</gene>
<keyword id="KW-0225">Disease variant</keyword>
<keyword id="KW-0256">Endoplasmic reticulum</keyword>
<keyword id="KW-0337">GPI-anchor biosynthesis</keyword>
<keyword id="KW-0991">Intellectual disability</keyword>
<keyword id="KW-0472">Membrane</keyword>
<keyword id="KW-1267">Proteomics identification</keyword>
<keyword id="KW-1185">Reference proteome</keyword>
<keyword id="KW-0812">Transmembrane</keyword>
<keyword id="KW-1133">Transmembrane helix</keyword>
<organism>
    <name type="scientific">Homo sapiens</name>
    <name type="common">Human</name>
    <dbReference type="NCBI Taxonomy" id="9606"/>
    <lineage>
        <taxon>Eukaryota</taxon>
        <taxon>Metazoa</taxon>
        <taxon>Chordata</taxon>
        <taxon>Craniata</taxon>
        <taxon>Vertebrata</taxon>
        <taxon>Euteleostomi</taxon>
        <taxon>Mammalia</taxon>
        <taxon>Eutheria</taxon>
        <taxon>Euarchontoglires</taxon>
        <taxon>Primates</taxon>
        <taxon>Haplorrhini</taxon>
        <taxon>Catarrhini</taxon>
        <taxon>Hominidae</taxon>
        <taxon>Homo</taxon>
    </lineage>
</organism>
<comment type="function">
    <text evidence="2 3 4">Part of the glycosylphosphatidylinositol-N-acetylglucosaminyltransferase (GPI-GnT) complex that catalyzes the transfer of N-acetylglucosamine from UDP-N-acetylglucosamine to phosphatidylinositol and participates in the first step of GPI biosynthesis.</text>
</comment>
<comment type="pathway">
    <text evidence="2">Glycolipid biosynthesis; glycosylphosphatidylinositol-anchor biosynthesis.</text>
</comment>
<comment type="subunit">
    <text evidence="2 6">Component of the glycosylphosphatidylinositol-N-acetylglucosaminyltransferase (GPI-GnT) complex composed at least by PIGA, PIGC, PIGH, PIGP, PIGQ, PIGY and DPM2 (PubMed:16162815, PubMed:9463366). Interacts with PIGQ (PubMed:9463366). Interacts with the heterodimer PIGA:PIGH (PubMed:9463366).</text>
</comment>
<comment type="interaction">
    <interactant intactId="EBI-721918">
        <id>Q92535</id>
    </interactant>
    <interactant intactId="EBI-9097061">
        <id>O94777</id>
        <label>DPM2</label>
    </interactant>
    <organismsDiffer>false</organismsDiffer>
    <experiments>2</experiments>
</comment>
<comment type="interaction">
    <interactant intactId="EBI-721918">
        <id>Q92535</id>
    </interactant>
    <interactant intactId="EBI-2339260">
        <id>Q9BRB3</id>
        <label>PIGQ</label>
    </interactant>
    <organismsDiffer>false</organismsDiffer>
    <experiments>4</experiments>
</comment>
<comment type="subcellular location">
    <subcellularLocation>
        <location evidence="4">Endoplasmic reticulum membrane</location>
        <topology evidence="7">Multi-pass membrane protein</topology>
    </subcellularLocation>
</comment>
<comment type="disease" evidence="3">
    <disease id="DI-05164">
        <name>Glycosylphosphatidylinositol biosynthesis defect 16</name>
        <acronym>GPIBD16</acronym>
        <description>An autosomal recessive disorder characterized by delayed psychomotor development, intellectual disability, and seizures.</description>
        <dbReference type="MIM" id="617816"/>
    </disease>
    <text>The disease is caused by variants affecting the gene represented in this entry.</text>
</comment>
<comment type="similarity">
    <text evidence="7">Belongs to the PIGC family.</text>
</comment>
<comment type="online information" name="Functional Glycomics Gateway - GTase">
    <link uri="http://www.functionalglycomics.org/glycomics/molecule/jsp/glycoEnzyme/viewGlycoEnzyme.jsp?gbpId=gt_hum_556"/>
    <text>Phosphatidylinositol N-acetylglucosaminyltransferase subunit C8</text>
</comment>
<accession>Q92535</accession>
<accession>O14491</accession>
<feature type="chain" id="PRO_0000058431" description="Phosphatidylinositol N-acetylglucosaminyltransferase subunit C">
    <location>
        <begin position="1"/>
        <end position="297"/>
    </location>
</feature>
<feature type="transmembrane region" description="Helical" evidence="1">
    <location>
        <begin position="51"/>
        <end position="71"/>
    </location>
</feature>
<feature type="transmembrane region" description="Helical" evidence="1">
    <location>
        <begin position="80"/>
        <end position="100"/>
    </location>
</feature>
<feature type="transmembrane region" description="Helical" evidence="1">
    <location>
        <begin position="117"/>
        <end position="137"/>
    </location>
</feature>
<feature type="transmembrane region" description="Helical" evidence="1">
    <location>
        <begin position="153"/>
        <end position="173"/>
    </location>
</feature>
<feature type="transmembrane region" description="Helical" evidence="1">
    <location>
        <begin position="174"/>
        <end position="194"/>
    </location>
</feature>
<feature type="transmembrane region" description="Helical" evidence="1">
    <location>
        <begin position="196"/>
        <end position="216"/>
    </location>
</feature>
<feature type="transmembrane region" description="Helical" evidence="1">
    <location>
        <begin position="227"/>
        <end position="244"/>
    </location>
</feature>
<feature type="transmembrane region" description="Helical" evidence="1">
    <location>
        <begin position="250"/>
        <end position="270"/>
    </location>
</feature>
<feature type="sequence variant" id="VAR_080520" description="In GPIBD16; decreased function in GPI-anchor biosynthesis as indicated by reduced surface expression of various GPI-anchored proteins." evidence="3">
    <location>
        <begin position="21"/>
        <end position="297"/>
    </location>
</feature>
<feature type="sequence variant" id="VAR_080521" description="In GPIBD16; decreased function in GPI-anchor biosynthesis as indicated by reduced surface expression of various GPI-anchored proteins; dbSNP:rs1553259614." evidence="3">
    <original>L</original>
    <variation>W</variation>
    <location>
        <position position="189"/>
    </location>
</feature>
<feature type="sequence variant" id="VAR_080522" description="In GPIBD16; decreased function in GPI-anchor biosynthesis as indicated by reduced surface expression of various GPI-anchored proteins; dbSNP:rs1553259602." evidence="3">
    <original>L</original>
    <variation>P</variation>
    <location>
        <position position="212"/>
    </location>
</feature>
<feature type="sequence variant" id="VAR_011360" description="In dbSNP:rs1063412." evidence="5">
    <original>P</original>
    <variation>S</variation>
    <location>
        <position position="266"/>
    </location>
</feature>
<dbReference type="EMBL" id="D85418">
    <property type="protein sequence ID" value="BAA12812.1"/>
    <property type="molecule type" value="mRNA"/>
</dbReference>
<dbReference type="EMBL" id="AB000360">
    <property type="protein sequence ID" value="BAA22866.1"/>
    <property type="molecule type" value="Genomic_DNA"/>
</dbReference>
<dbReference type="EMBL" id="BT006734">
    <property type="protein sequence ID" value="AAP35380.1"/>
    <property type="molecule type" value="mRNA"/>
</dbReference>
<dbReference type="EMBL" id="CR450292">
    <property type="protein sequence ID" value="CAG29288.1"/>
    <property type="molecule type" value="mRNA"/>
</dbReference>
<dbReference type="EMBL" id="Z97195">
    <property type="status" value="NOT_ANNOTATED_CDS"/>
    <property type="molecule type" value="Genomic_DNA"/>
</dbReference>
<dbReference type="EMBL" id="BC006539">
    <property type="protein sequence ID" value="AAH06539.1"/>
    <property type="molecule type" value="mRNA"/>
</dbReference>
<dbReference type="CCDS" id="CCDS1302.1"/>
<dbReference type="PIR" id="JC4969">
    <property type="entry name" value="JC4969"/>
</dbReference>
<dbReference type="RefSeq" id="NP_002633.1">
    <property type="nucleotide sequence ID" value="NM_002642.4"/>
</dbReference>
<dbReference type="RefSeq" id="NP_714969.1">
    <property type="nucleotide sequence ID" value="NM_153747.2"/>
</dbReference>
<dbReference type="BioGRID" id="111297">
    <property type="interactions" value="12"/>
</dbReference>
<dbReference type="ComplexPortal" id="CPX-6502">
    <property type="entry name" value="Glycosylphosphatidylinositol-N-acetylglucosaminyltransferase complex"/>
</dbReference>
<dbReference type="CORUM" id="Q92535"/>
<dbReference type="FunCoup" id="Q92535">
    <property type="interactions" value="1421"/>
</dbReference>
<dbReference type="IntAct" id="Q92535">
    <property type="interactions" value="6"/>
</dbReference>
<dbReference type="MINT" id="Q92535"/>
<dbReference type="STRING" id="9606.ENSP00000356702"/>
<dbReference type="iPTMnet" id="Q92535"/>
<dbReference type="PhosphoSitePlus" id="Q92535"/>
<dbReference type="BioMuta" id="PIGC"/>
<dbReference type="DMDM" id="14916629"/>
<dbReference type="MassIVE" id="Q92535"/>
<dbReference type="PaxDb" id="9606-ENSP00000356702"/>
<dbReference type="PeptideAtlas" id="Q92535"/>
<dbReference type="ProteomicsDB" id="75293"/>
<dbReference type="Antibodypedia" id="34384">
    <property type="antibodies" value="83 antibodies from 23 providers"/>
</dbReference>
<dbReference type="DNASU" id="5279"/>
<dbReference type="Ensembl" id="ENST00000344529.5">
    <property type="protein sequence ID" value="ENSP00000356701.3"/>
    <property type="gene ID" value="ENSG00000135845.10"/>
</dbReference>
<dbReference type="Ensembl" id="ENST00000367728.1">
    <property type="protein sequence ID" value="ENSP00000356702.1"/>
    <property type="gene ID" value="ENSG00000135845.10"/>
</dbReference>
<dbReference type="GeneID" id="5279"/>
<dbReference type="KEGG" id="hsa:5279"/>
<dbReference type="MANE-Select" id="ENST00000344529.5">
    <property type="protein sequence ID" value="ENSP00000356701.3"/>
    <property type="RefSeq nucleotide sequence ID" value="NM_153747.2"/>
    <property type="RefSeq protein sequence ID" value="NP_714969.1"/>
</dbReference>
<dbReference type="UCSC" id="uc001gio.4">
    <property type="organism name" value="human"/>
</dbReference>
<dbReference type="AGR" id="HGNC:8960"/>
<dbReference type="CTD" id="5279"/>
<dbReference type="DisGeNET" id="5279"/>
<dbReference type="GeneCards" id="PIGC"/>
<dbReference type="HGNC" id="HGNC:8960">
    <property type="gene designation" value="PIGC"/>
</dbReference>
<dbReference type="HPA" id="ENSG00000135845">
    <property type="expression patterns" value="Low tissue specificity"/>
</dbReference>
<dbReference type="MalaCards" id="PIGC"/>
<dbReference type="MIM" id="601730">
    <property type="type" value="gene"/>
</dbReference>
<dbReference type="MIM" id="617816">
    <property type="type" value="phenotype"/>
</dbReference>
<dbReference type="neXtProt" id="NX_Q92535"/>
<dbReference type="OpenTargets" id="ENSG00000135845"/>
<dbReference type="Orphanet" id="88616">
    <property type="disease" value="Autosomal recessive non-syndromic intellectual disability"/>
</dbReference>
<dbReference type="PharmGKB" id="PA33291"/>
<dbReference type="VEuPathDB" id="HostDB:ENSG00000135845"/>
<dbReference type="eggNOG" id="KOG3059">
    <property type="taxonomic scope" value="Eukaryota"/>
</dbReference>
<dbReference type="GeneTree" id="ENSGT00390000005496"/>
<dbReference type="HOGENOM" id="CLU_024002_0_0_1"/>
<dbReference type="InParanoid" id="Q92535"/>
<dbReference type="OMA" id="STSYHAF"/>
<dbReference type="OrthoDB" id="196709at2759"/>
<dbReference type="PAN-GO" id="Q92535">
    <property type="GO annotations" value="1 GO annotation based on evolutionary models"/>
</dbReference>
<dbReference type="PhylomeDB" id="Q92535"/>
<dbReference type="TreeFam" id="TF314325"/>
<dbReference type="PathwayCommons" id="Q92535"/>
<dbReference type="Reactome" id="R-HSA-162710">
    <property type="pathway name" value="Synthesis of glycosylphosphatidylinositol (GPI)"/>
</dbReference>
<dbReference type="SignaLink" id="Q92535"/>
<dbReference type="UniPathway" id="UPA00196"/>
<dbReference type="BioGRID-ORCS" id="5279">
    <property type="hits" value="90 hits in 1147 CRISPR screens"/>
</dbReference>
<dbReference type="GeneWiki" id="PIGC"/>
<dbReference type="GenomeRNAi" id="5279"/>
<dbReference type="Pharos" id="Q92535">
    <property type="development level" value="Tbio"/>
</dbReference>
<dbReference type="PRO" id="PR:Q92535"/>
<dbReference type="Proteomes" id="UP000005640">
    <property type="component" value="Chromosome 1"/>
</dbReference>
<dbReference type="RNAct" id="Q92535">
    <property type="molecule type" value="protein"/>
</dbReference>
<dbReference type="Bgee" id="ENSG00000135845">
    <property type="expression patterns" value="Expressed in calcaneal tendon and 209 other cell types or tissues"/>
</dbReference>
<dbReference type="GO" id="GO:0005789">
    <property type="term" value="C:endoplasmic reticulum membrane"/>
    <property type="evidence" value="ECO:0000314"/>
    <property type="project" value="ComplexPortal"/>
</dbReference>
<dbReference type="GO" id="GO:0000506">
    <property type="term" value="C:glycosylphosphatidylinositol-N-acetylglucosaminyltransferase (GPI-GnT) complex"/>
    <property type="evidence" value="ECO:0000314"/>
    <property type="project" value="UniProtKB"/>
</dbReference>
<dbReference type="GO" id="GO:0003824">
    <property type="term" value="F:catalytic activity"/>
    <property type="evidence" value="ECO:0000304"/>
    <property type="project" value="ProtInc"/>
</dbReference>
<dbReference type="GO" id="GO:0006506">
    <property type="term" value="P:GPI anchor biosynthetic process"/>
    <property type="evidence" value="ECO:0000314"/>
    <property type="project" value="UniProtKB"/>
</dbReference>
<dbReference type="InterPro" id="IPR009450">
    <property type="entry name" value="Plno_GlcNAc_GPI2"/>
</dbReference>
<dbReference type="PANTHER" id="PTHR12982">
    <property type="entry name" value="PHOSPHATIDYLINOSITOL GLYCAN, CLASS C"/>
    <property type="match status" value="1"/>
</dbReference>
<dbReference type="PANTHER" id="PTHR12982:SF1">
    <property type="entry name" value="PHOSPHATIDYLINOSITOL N-ACETYLGLUCOSAMINYLTRANSFERASE SUBUNIT C"/>
    <property type="match status" value="1"/>
</dbReference>
<dbReference type="Pfam" id="PF06432">
    <property type="entry name" value="GPI2"/>
    <property type="match status" value="1"/>
</dbReference>
<dbReference type="PIRSF" id="PIRSF016104">
    <property type="entry name" value="GPI2"/>
    <property type="match status" value="1"/>
</dbReference>
<evidence type="ECO:0000255" key="1"/>
<evidence type="ECO:0000269" key="2">
    <source>
    </source>
</evidence>
<evidence type="ECO:0000269" key="3">
    <source>
    </source>
</evidence>
<evidence type="ECO:0000269" key="4">
    <source>
    </source>
</evidence>
<evidence type="ECO:0000269" key="5">
    <source>
    </source>
</evidence>
<evidence type="ECO:0000269" key="6">
    <source>
    </source>
</evidence>
<evidence type="ECO:0000305" key="7"/>
<evidence type="ECO:0000312" key="8">
    <source>
        <dbReference type="HGNC" id="HGNC:8960"/>
    </source>
</evidence>
<protein>
    <recommendedName>
        <fullName evidence="7">Phosphatidylinositol N-acetylglucosaminyltransferase subunit C</fullName>
    </recommendedName>
    <alternativeName>
        <fullName>Phosphatidylinositol-glycan biosynthesis class C protein</fullName>
        <shortName>PIG-C</shortName>
    </alternativeName>
</protein>
<proteinExistence type="evidence at protein level"/>
<name>PIGC_HUMAN</name>
<reference key="1">
    <citation type="journal article" date="1996" name="Biochem. Biophys. Res. Commun.">
        <title>PIG-C, one of the three human genes involved in the first step of glycosylphosphatidylinositol biosynthesis is a homologue of Saccharomyces cerevisiae GPI2.</title>
        <authorList>
            <person name="Inoue N."/>
            <person name="Watanabe R."/>
            <person name="Takeda J."/>
            <person name="Kinoshita T."/>
        </authorList>
    </citation>
    <scope>NUCLEOTIDE SEQUENCE [MRNA]</scope>
    <scope>FUNCTION</scope>
    <scope>SUBCELLULAR LOCATION</scope>
</reference>
<reference key="2">
    <citation type="journal article" date="1997" name="Genomics">
        <title>Structures and chromosomal localizations of the glycosylphosphatidylinositol synthesis gene PIGC and its pseudogene PIGCP1.</title>
        <authorList>
            <person name="Hong Y."/>
            <person name="Ohishi K."/>
            <person name="Inoue N."/>
            <person name="Endo Y."/>
            <person name="Fujita T."/>
            <person name="Takeda J."/>
            <person name="Kinoshita T."/>
        </authorList>
    </citation>
    <scope>NUCLEOTIDE SEQUENCE [GENOMIC DNA]</scope>
    <scope>VARIANT SER-266</scope>
    <source>
        <tissue>Fibroblast</tissue>
    </source>
</reference>
<reference key="3">
    <citation type="submission" date="2003-05" db="EMBL/GenBank/DDBJ databases">
        <title>Cloning of human full-length CDSs in BD Creator(TM) system donor vector.</title>
        <authorList>
            <person name="Kalnine N."/>
            <person name="Chen X."/>
            <person name="Rolfs A."/>
            <person name="Halleck A."/>
            <person name="Hines L."/>
            <person name="Eisenstein S."/>
            <person name="Koundinya M."/>
            <person name="Raphael J."/>
            <person name="Moreira D."/>
            <person name="Kelley T."/>
            <person name="LaBaer J."/>
            <person name="Lin Y."/>
            <person name="Phelan M."/>
            <person name="Farmer A."/>
        </authorList>
    </citation>
    <scope>NUCLEOTIDE SEQUENCE [LARGE SCALE MRNA]</scope>
</reference>
<reference key="4">
    <citation type="submission" date="2004-05" db="EMBL/GenBank/DDBJ databases">
        <title>Cloning of human full open reading frames in Gateway(TM) system entry vector (pDONR201).</title>
        <authorList>
            <person name="Ebert L."/>
            <person name="Schick M."/>
            <person name="Neubert P."/>
            <person name="Schatten R."/>
            <person name="Henze S."/>
            <person name="Korn B."/>
        </authorList>
    </citation>
    <scope>NUCLEOTIDE SEQUENCE [LARGE SCALE MRNA]</scope>
</reference>
<reference key="5">
    <citation type="journal article" date="2006" name="Nature">
        <title>The DNA sequence and biological annotation of human chromosome 1.</title>
        <authorList>
            <person name="Gregory S.G."/>
            <person name="Barlow K.F."/>
            <person name="McLay K.E."/>
            <person name="Kaul R."/>
            <person name="Swarbreck D."/>
            <person name="Dunham A."/>
            <person name="Scott C.E."/>
            <person name="Howe K.L."/>
            <person name="Woodfine K."/>
            <person name="Spencer C.C.A."/>
            <person name="Jones M.C."/>
            <person name="Gillson C."/>
            <person name="Searle S."/>
            <person name="Zhou Y."/>
            <person name="Kokocinski F."/>
            <person name="McDonald L."/>
            <person name="Evans R."/>
            <person name="Phillips K."/>
            <person name="Atkinson A."/>
            <person name="Cooper R."/>
            <person name="Jones C."/>
            <person name="Hall R.E."/>
            <person name="Andrews T.D."/>
            <person name="Lloyd C."/>
            <person name="Ainscough R."/>
            <person name="Almeida J.P."/>
            <person name="Ambrose K.D."/>
            <person name="Anderson F."/>
            <person name="Andrew R.W."/>
            <person name="Ashwell R.I.S."/>
            <person name="Aubin K."/>
            <person name="Babbage A.K."/>
            <person name="Bagguley C.L."/>
            <person name="Bailey J."/>
            <person name="Beasley H."/>
            <person name="Bethel G."/>
            <person name="Bird C.P."/>
            <person name="Bray-Allen S."/>
            <person name="Brown J.Y."/>
            <person name="Brown A.J."/>
            <person name="Buckley D."/>
            <person name="Burton J."/>
            <person name="Bye J."/>
            <person name="Carder C."/>
            <person name="Chapman J.C."/>
            <person name="Clark S.Y."/>
            <person name="Clarke G."/>
            <person name="Clee C."/>
            <person name="Cobley V."/>
            <person name="Collier R.E."/>
            <person name="Corby N."/>
            <person name="Coville G.J."/>
            <person name="Davies J."/>
            <person name="Deadman R."/>
            <person name="Dunn M."/>
            <person name="Earthrowl M."/>
            <person name="Ellington A.G."/>
            <person name="Errington H."/>
            <person name="Frankish A."/>
            <person name="Frankland J."/>
            <person name="French L."/>
            <person name="Garner P."/>
            <person name="Garnett J."/>
            <person name="Gay L."/>
            <person name="Ghori M.R.J."/>
            <person name="Gibson R."/>
            <person name="Gilby L.M."/>
            <person name="Gillett W."/>
            <person name="Glithero R.J."/>
            <person name="Grafham D.V."/>
            <person name="Griffiths C."/>
            <person name="Griffiths-Jones S."/>
            <person name="Grocock R."/>
            <person name="Hammond S."/>
            <person name="Harrison E.S.I."/>
            <person name="Hart E."/>
            <person name="Haugen E."/>
            <person name="Heath P.D."/>
            <person name="Holmes S."/>
            <person name="Holt K."/>
            <person name="Howden P.J."/>
            <person name="Hunt A.R."/>
            <person name="Hunt S.E."/>
            <person name="Hunter G."/>
            <person name="Isherwood J."/>
            <person name="James R."/>
            <person name="Johnson C."/>
            <person name="Johnson D."/>
            <person name="Joy A."/>
            <person name="Kay M."/>
            <person name="Kershaw J.K."/>
            <person name="Kibukawa M."/>
            <person name="Kimberley A.M."/>
            <person name="King A."/>
            <person name="Knights A.J."/>
            <person name="Lad H."/>
            <person name="Laird G."/>
            <person name="Lawlor S."/>
            <person name="Leongamornlert D.A."/>
            <person name="Lloyd D.M."/>
            <person name="Loveland J."/>
            <person name="Lovell J."/>
            <person name="Lush M.J."/>
            <person name="Lyne R."/>
            <person name="Martin S."/>
            <person name="Mashreghi-Mohammadi M."/>
            <person name="Matthews L."/>
            <person name="Matthews N.S.W."/>
            <person name="McLaren S."/>
            <person name="Milne S."/>
            <person name="Mistry S."/>
            <person name="Moore M.J.F."/>
            <person name="Nickerson T."/>
            <person name="O'Dell C.N."/>
            <person name="Oliver K."/>
            <person name="Palmeiri A."/>
            <person name="Palmer S.A."/>
            <person name="Parker A."/>
            <person name="Patel D."/>
            <person name="Pearce A.V."/>
            <person name="Peck A.I."/>
            <person name="Pelan S."/>
            <person name="Phelps K."/>
            <person name="Phillimore B.J."/>
            <person name="Plumb R."/>
            <person name="Rajan J."/>
            <person name="Raymond C."/>
            <person name="Rouse G."/>
            <person name="Saenphimmachak C."/>
            <person name="Sehra H.K."/>
            <person name="Sheridan E."/>
            <person name="Shownkeen R."/>
            <person name="Sims S."/>
            <person name="Skuce C.D."/>
            <person name="Smith M."/>
            <person name="Steward C."/>
            <person name="Subramanian S."/>
            <person name="Sycamore N."/>
            <person name="Tracey A."/>
            <person name="Tromans A."/>
            <person name="Van Helmond Z."/>
            <person name="Wall M."/>
            <person name="Wallis J.M."/>
            <person name="White S."/>
            <person name="Whitehead S.L."/>
            <person name="Wilkinson J.E."/>
            <person name="Willey D.L."/>
            <person name="Williams H."/>
            <person name="Wilming L."/>
            <person name="Wray P.W."/>
            <person name="Wu Z."/>
            <person name="Coulson A."/>
            <person name="Vaudin M."/>
            <person name="Sulston J.E."/>
            <person name="Durbin R.M."/>
            <person name="Hubbard T."/>
            <person name="Wooster R."/>
            <person name="Dunham I."/>
            <person name="Carter N.P."/>
            <person name="McVean G."/>
            <person name="Ross M.T."/>
            <person name="Harrow J."/>
            <person name="Olson M.V."/>
            <person name="Beck S."/>
            <person name="Rogers J."/>
            <person name="Bentley D.R."/>
        </authorList>
    </citation>
    <scope>NUCLEOTIDE SEQUENCE [LARGE SCALE GENOMIC DNA]</scope>
</reference>
<reference key="6">
    <citation type="journal article" date="2004" name="Genome Res.">
        <title>The status, quality, and expansion of the NIH full-length cDNA project: the Mammalian Gene Collection (MGC).</title>
        <authorList>
            <consortium name="The MGC Project Team"/>
        </authorList>
    </citation>
    <scope>NUCLEOTIDE SEQUENCE [LARGE SCALE MRNA]</scope>
    <source>
        <tissue>Lung</tissue>
    </source>
</reference>
<reference key="7">
    <citation type="journal article" date="1998" name="EMBO J.">
        <title>The first step of glycosylphosphatidylinositol biosynthesis is mediated by a complex of PIG-A, PIG-H, PIG-C and GPI1.</title>
        <authorList>
            <person name="Watanabe R."/>
            <person name="Inoue N."/>
            <person name="Westfall B."/>
            <person name="Taron C.H."/>
            <person name="Orlean P."/>
            <person name="Takeda J."/>
            <person name="Kinoshita T."/>
        </authorList>
    </citation>
    <scope>COMPONENT OF GPI-GNT COMPLEX</scope>
    <scope>INTERACTION WITH PIGQ AND PIGA:PIGH HETERODIMER</scope>
</reference>
<reference key="8">
    <citation type="journal article" date="2005" name="Mol. Biol. Cell">
        <title>The initial enzyme for glycosylphosphatidylinositol biosynthesis requires PIG-Y, a seventh component.</title>
        <authorList>
            <person name="Murakami Y."/>
            <person name="Siripanyaphinyo U."/>
            <person name="Hong Y."/>
            <person name="Tashima Y."/>
            <person name="Maeda Y."/>
            <person name="Kinoshita T."/>
        </authorList>
    </citation>
    <scope>COMPONENT OF GPI-GNT COMPLEX</scope>
    <scope>FUNCTION</scope>
</reference>
<reference key="9">
    <citation type="journal article" date="2017" name="J. Med. Genet.">
        <title>Mutations in the phosphatidylinositol glycan C (PIGC) gene are associated with epilepsy and intellectual disability.</title>
        <authorList>
            <person name="Edvardson S."/>
            <person name="Murakami Y."/>
            <person name="Nguyen T.T."/>
            <person name="Shahrour M."/>
            <person name="St-Denis A."/>
            <person name="Shaag A."/>
            <person name="Damseh N."/>
            <person name="Le Deist F."/>
            <person name="Bryceson Y."/>
            <person name="Abu-Libdeh B."/>
            <person name="Campeau P.M."/>
            <person name="Kinoshita T."/>
            <person name="Elpeleg O."/>
        </authorList>
    </citation>
    <scope>FUNCTION</scope>
    <scope>INVOLVEMENT IN GPIBD16</scope>
    <scope>VARIANTS GPIBD16 21-ARG--SER-297 DEL; TRP-189 AND PRO-212</scope>
    <scope>CHARACTERIZATION OF VARIANTS GPIBD16 21-ARG--SER-297 DEL; TRP-189 AND PRO-212</scope>
</reference>